<protein>
    <recommendedName>
        <fullName evidence="1">Shikimate dehydrogenase (NADP(+))</fullName>
        <shortName evidence="1">SDH</shortName>
        <ecNumber evidence="1">1.1.1.25</ecNumber>
    </recommendedName>
</protein>
<reference key="1">
    <citation type="journal article" date="2005" name="DNA Res.">
        <title>Complete genome sequence of the facultative anaerobic magnetotactic bacterium Magnetospirillum sp. strain AMB-1.</title>
        <authorList>
            <person name="Matsunaga T."/>
            <person name="Okamura Y."/>
            <person name="Fukuda Y."/>
            <person name="Wahyudi A.T."/>
            <person name="Murase Y."/>
            <person name="Takeyama H."/>
        </authorList>
    </citation>
    <scope>NUCLEOTIDE SEQUENCE [LARGE SCALE GENOMIC DNA]</scope>
    <source>
        <strain>ATCC 700264 / AMB-1</strain>
    </source>
</reference>
<organism>
    <name type="scientific">Paramagnetospirillum magneticum (strain ATCC 700264 / AMB-1)</name>
    <name type="common">Magnetospirillum magneticum</name>
    <dbReference type="NCBI Taxonomy" id="342108"/>
    <lineage>
        <taxon>Bacteria</taxon>
        <taxon>Pseudomonadati</taxon>
        <taxon>Pseudomonadota</taxon>
        <taxon>Alphaproteobacteria</taxon>
        <taxon>Rhodospirillales</taxon>
        <taxon>Magnetospirillaceae</taxon>
        <taxon>Paramagnetospirillum</taxon>
    </lineage>
</organism>
<keyword id="KW-0028">Amino-acid biosynthesis</keyword>
<keyword id="KW-0057">Aromatic amino acid biosynthesis</keyword>
<keyword id="KW-0521">NADP</keyword>
<keyword id="KW-0560">Oxidoreductase</keyword>
<dbReference type="EC" id="1.1.1.25" evidence="1"/>
<dbReference type="EMBL" id="AP007255">
    <property type="protein sequence ID" value="BAE53351.1"/>
    <property type="molecule type" value="Genomic_DNA"/>
</dbReference>
<dbReference type="SMR" id="Q2VYH4"/>
<dbReference type="STRING" id="342108.amb4547"/>
<dbReference type="KEGG" id="mag:amb4547"/>
<dbReference type="HOGENOM" id="CLU_044063_2_0_5"/>
<dbReference type="UniPathway" id="UPA00053">
    <property type="reaction ID" value="UER00087"/>
</dbReference>
<dbReference type="Proteomes" id="UP000007058">
    <property type="component" value="Chromosome"/>
</dbReference>
<dbReference type="GO" id="GO:0005829">
    <property type="term" value="C:cytosol"/>
    <property type="evidence" value="ECO:0007669"/>
    <property type="project" value="TreeGrafter"/>
</dbReference>
<dbReference type="GO" id="GO:0050661">
    <property type="term" value="F:NADP binding"/>
    <property type="evidence" value="ECO:0007669"/>
    <property type="project" value="InterPro"/>
</dbReference>
<dbReference type="GO" id="GO:0004764">
    <property type="term" value="F:shikimate 3-dehydrogenase (NADP+) activity"/>
    <property type="evidence" value="ECO:0007669"/>
    <property type="project" value="UniProtKB-UniRule"/>
</dbReference>
<dbReference type="GO" id="GO:0008652">
    <property type="term" value="P:amino acid biosynthetic process"/>
    <property type="evidence" value="ECO:0007669"/>
    <property type="project" value="UniProtKB-KW"/>
</dbReference>
<dbReference type="GO" id="GO:0009073">
    <property type="term" value="P:aromatic amino acid family biosynthetic process"/>
    <property type="evidence" value="ECO:0007669"/>
    <property type="project" value="UniProtKB-KW"/>
</dbReference>
<dbReference type="GO" id="GO:0009423">
    <property type="term" value="P:chorismate biosynthetic process"/>
    <property type="evidence" value="ECO:0007669"/>
    <property type="project" value="UniProtKB-UniRule"/>
</dbReference>
<dbReference type="GO" id="GO:0019632">
    <property type="term" value="P:shikimate metabolic process"/>
    <property type="evidence" value="ECO:0007669"/>
    <property type="project" value="InterPro"/>
</dbReference>
<dbReference type="CDD" id="cd01065">
    <property type="entry name" value="NAD_bind_Shikimate_DH"/>
    <property type="match status" value="1"/>
</dbReference>
<dbReference type="Gene3D" id="3.40.50.10860">
    <property type="entry name" value="Leucine Dehydrogenase, chain A, domain 1"/>
    <property type="match status" value="1"/>
</dbReference>
<dbReference type="Gene3D" id="3.40.50.720">
    <property type="entry name" value="NAD(P)-binding Rossmann-like Domain"/>
    <property type="match status" value="1"/>
</dbReference>
<dbReference type="HAMAP" id="MF_00222">
    <property type="entry name" value="Shikimate_DH_AroE"/>
    <property type="match status" value="1"/>
</dbReference>
<dbReference type="InterPro" id="IPR046346">
    <property type="entry name" value="Aminoacid_DH-like_N_sf"/>
</dbReference>
<dbReference type="InterPro" id="IPR036291">
    <property type="entry name" value="NAD(P)-bd_dom_sf"/>
</dbReference>
<dbReference type="InterPro" id="IPR041121">
    <property type="entry name" value="SDH_C"/>
</dbReference>
<dbReference type="InterPro" id="IPR011342">
    <property type="entry name" value="Shikimate_DH"/>
</dbReference>
<dbReference type="InterPro" id="IPR013708">
    <property type="entry name" value="Shikimate_DH-bd_N"/>
</dbReference>
<dbReference type="InterPro" id="IPR022893">
    <property type="entry name" value="Shikimate_DH_fam"/>
</dbReference>
<dbReference type="InterPro" id="IPR006151">
    <property type="entry name" value="Shikm_DH/Glu-tRNA_Rdtase"/>
</dbReference>
<dbReference type="NCBIfam" id="TIGR00507">
    <property type="entry name" value="aroE"/>
    <property type="match status" value="1"/>
</dbReference>
<dbReference type="NCBIfam" id="NF001312">
    <property type="entry name" value="PRK00258.1-4"/>
    <property type="match status" value="1"/>
</dbReference>
<dbReference type="PANTHER" id="PTHR21089:SF1">
    <property type="entry name" value="BIFUNCTIONAL 3-DEHYDROQUINATE DEHYDRATASE_SHIKIMATE DEHYDROGENASE, CHLOROPLASTIC"/>
    <property type="match status" value="1"/>
</dbReference>
<dbReference type="PANTHER" id="PTHR21089">
    <property type="entry name" value="SHIKIMATE DEHYDROGENASE"/>
    <property type="match status" value="1"/>
</dbReference>
<dbReference type="Pfam" id="PF18317">
    <property type="entry name" value="SDH_C"/>
    <property type="match status" value="1"/>
</dbReference>
<dbReference type="Pfam" id="PF01488">
    <property type="entry name" value="Shikimate_DH"/>
    <property type="match status" value="1"/>
</dbReference>
<dbReference type="Pfam" id="PF08501">
    <property type="entry name" value="Shikimate_dh_N"/>
    <property type="match status" value="1"/>
</dbReference>
<dbReference type="SUPFAM" id="SSF53223">
    <property type="entry name" value="Aminoacid dehydrogenase-like, N-terminal domain"/>
    <property type="match status" value="1"/>
</dbReference>
<dbReference type="SUPFAM" id="SSF51735">
    <property type="entry name" value="NAD(P)-binding Rossmann-fold domains"/>
    <property type="match status" value="1"/>
</dbReference>
<comment type="function">
    <text evidence="1">Involved in the biosynthesis of the chorismate, which leads to the biosynthesis of aromatic amino acids. Catalyzes the reversible NADPH linked reduction of 3-dehydroshikimate (DHSA) to yield shikimate (SA).</text>
</comment>
<comment type="catalytic activity">
    <reaction evidence="1">
        <text>shikimate + NADP(+) = 3-dehydroshikimate + NADPH + H(+)</text>
        <dbReference type="Rhea" id="RHEA:17737"/>
        <dbReference type="ChEBI" id="CHEBI:15378"/>
        <dbReference type="ChEBI" id="CHEBI:16630"/>
        <dbReference type="ChEBI" id="CHEBI:36208"/>
        <dbReference type="ChEBI" id="CHEBI:57783"/>
        <dbReference type="ChEBI" id="CHEBI:58349"/>
        <dbReference type="EC" id="1.1.1.25"/>
    </reaction>
</comment>
<comment type="pathway">
    <text evidence="1">Metabolic intermediate biosynthesis; chorismate biosynthesis; chorismate from D-erythrose 4-phosphate and phosphoenolpyruvate: step 4/7.</text>
</comment>
<comment type="subunit">
    <text evidence="1">Homodimer.</text>
</comment>
<comment type="similarity">
    <text evidence="1">Belongs to the shikimate dehydrogenase family.</text>
</comment>
<sequence length="276" mass="29189">MSGKARLAGVLGWPVSHSRSPRLHGFWLEQMGIDGAYLPLAVAPEHLETVIRALPRMGFAGANVTVPHKEAVMRLVDHLDPLARRIGAVNTLVVRQDGTLEGRNTDAYGFFENLRQGCPLWEPTSGPAAVIGAGGAARAVVAALADAGVPEIRLANRSRERAATLAADLGGPVTVVDWAERAESLEGCALLVNTTTLGMTGQSSLDLDLAALPTTSVVNDIVYVPLVTDLLARATARGNPIVDGLGMLLHQAVPGFEAWFGQRPQVSDQLRAFVLS</sequence>
<accession>Q2VYH4</accession>
<proteinExistence type="inferred from homology"/>
<evidence type="ECO:0000255" key="1">
    <source>
        <dbReference type="HAMAP-Rule" id="MF_00222"/>
    </source>
</evidence>
<gene>
    <name evidence="1" type="primary">aroE</name>
    <name type="ordered locus">amb4547</name>
</gene>
<feature type="chain" id="PRO_1000021296" description="Shikimate dehydrogenase (NADP(+))">
    <location>
        <begin position="1"/>
        <end position="276"/>
    </location>
</feature>
<feature type="active site" description="Proton acceptor" evidence="1">
    <location>
        <position position="69"/>
    </location>
</feature>
<feature type="binding site" evidence="1">
    <location>
        <begin position="18"/>
        <end position="20"/>
    </location>
    <ligand>
        <name>shikimate</name>
        <dbReference type="ChEBI" id="CHEBI:36208"/>
    </ligand>
</feature>
<feature type="binding site" evidence="1">
    <location>
        <position position="65"/>
    </location>
    <ligand>
        <name>shikimate</name>
        <dbReference type="ChEBI" id="CHEBI:36208"/>
    </ligand>
</feature>
<feature type="binding site" evidence="1">
    <location>
        <position position="90"/>
    </location>
    <ligand>
        <name>shikimate</name>
        <dbReference type="ChEBI" id="CHEBI:36208"/>
    </ligand>
</feature>
<feature type="binding site" evidence="1">
    <location>
        <position position="106"/>
    </location>
    <ligand>
        <name>shikimate</name>
        <dbReference type="ChEBI" id="CHEBI:36208"/>
    </ligand>
</feature>
<feature type="binding site" evidence="1">
    <location>
        <begin position="132"/>
        <end position="136"/>
    </location>
    <ligand>
        <name>NADP(+)</name>
        <dbReference type="ChEBI" id="CHEBI:58349"/>
    </ligand>
</feature>
<feature type="binding site" evidence="1">
    <location>
        <position position="221"/>
    </location>
    <ligand>
        <name>NADP(+)</name>
        <dbReference type="ChEBI" id="CHEBI:58349"/>
    </ligand>
</feature>
<feature type="binding site" evidence="1">
    <location>
        <position position="223"/>
    </location>
    <ligand>
        <name>shikimate</name>
        <dbReference type="ChEBI" id="CHEBI:36208"/>
    </ligand>
</feature>
<feature type="binding site" evidence="1">
    <location>
        <position position="244"/>
    </location>
    <ligand>
        <name>NADP(+)</name>
        <dbReference type="ChEBI" id="CHEBI:58349"/>
    </ligand>
</feature>
<name>AROE_PARM1</name>